<proteinExistence type="inferred from homology"/>
<evidence type="ECO:0000255" key="1">
    <source>
        <dbReference type="HAMAP-Rule" id="MF_01326"/>
    </source>
</evidence>
<evidence type="ECO:0000305" key="2"/>
<sequence length="103" mass="11208">MQKIRKGDSVVVLSGKDKGRKGEVLKVMPKDEQALVSGINIVKRHQRQTQTQEAGIISKEAPIHLSNLAIADPKDGKPTRVGFRVEDGKKVRVAKRSGALIDG</sequence>
<comment type="function">
    <text evidence="1">One of two assembly initiator proteins, it binds directly to the 5'-end of the 23S rRNA, where it nucleates assembly of the 50S subunit.</text>
</comment>
<comment type="function">
    <text evidence="1">One of the proteins that surrounds the polypeptide exit tunnel on the outside of the subunit.</text>
</comment>
<comment type="subunit">
    <text evidence="1">Part of the 50S ribosomal subunit.</text>
</comment>
<comment type="similarity">
    <text evidence="1">Belongs to the universal ribosomal protein uL24 family.</text>
</comment>
<gene>
    <name evidence="1" type="primary">rplX</name>
    <name type="ordered locus">BAbS19_I11600</name>
</gene>
<reference key="1">
    <citation type="journal article" date="2008" name="PLoS ONE">
        <title>Genome sequence of Brucella abortus vaccine strain S19 compared to virulent strains yields candidate virulence genes.</title>
        <authorList>
            <person name="Crasta O.R."/>
            <person name="Folkerts O."/>
            <person name="Fei Z."/>
            <person name="Mane S.P."/>
            <person name="Evans C."/>
            <person name="Martino-Catt S."/>
            <person name="Bricker B."/>
            <person name="Yu G."/>
            <person name="Du L."/>
            <person name="Sobral B.W."/>
        </authorList>
    </citation>
    <scope>NUCLEOTIDE SEQUENCE [LARGE SCALE GENOMIC DNA]</scope>
    <source>
        <strain>S19</strain>
    </source>
</reference>
<organism>
    <name type="scientific">Brucella abortus (strain S19)</name>
    <dbReference type="NCBI Taxonomy" id="430066"/>
    <lineage>
        <taxon>Bacteria</taxon>
        <taxon>Pseudomonadati</taxon>
        <taxon>Pseudomonadota</taxon>
        <taxon>Alphaproteobacteria</taxon>
        <taxon>Hyphomicrobiales</taxon>
        <taxon>Brucellaceae</taxon>
        <taxon>Brucella/Ochrobactrum group</taxon>
        <taxon>Brucella</taxon>
    </lineage>
</organism>
<keyword id="KW-0687">Ribonucleoprotein</keyword>
<keyword id="KW-0689">Ribosomal protein</keyword>
<keyword id="KW-0694">RNA-binding</keyword>
<keyword id="KW-0699">rRNA-binding</keyword>
<protein>
    <recommendedName>
        <fullName evidence="1">Large ribosomal subunit protein uL24</fullName>
    </recommendedName>
    <alternativeName>
        <fullName evidence="2">50S ribosomal protein L24</fullName>
    </alternativeName>
</protein>
<accession>B2S668</accession>
<name>RL24_BRUA1</name>
<feature type="chain" id="PRO_1000141972" description="Large ribosomal subunit protein uL24">
    <location>
        <begin position="1"/>
        <end position="103"/>
    </location>
</feature>
<dbReference type="EMBL" id="CP000887">
    <property type="protein sequence ID" value="ACD72665.1"/>
    <property type="molecule type" value="Genomic_DNA"/>
</dbReference>
<dbReference type="RefSeq" id="WP_002964351.1">
    <property type="nucleotide sequence ID" value="NC_010742.1"/>
</dbReference>
<dbReference type="SMR" id="B2S668"/>
<dbReference type="GeneID" id="97533535"/>
<dbReference type="KEGG" id="bmc:BAbS19_I11600"/>
<dbReference type="HOGENOM" id="CLU_093315_2_2_5"/>
<dbReference type="Proteomes" id="UP000002565">
    <property type="component" value="Chromosome 1"/>
</dbReference>
<dbReference type="GO" id="GO:1990904">
    <property type="term" value="C:ribonucleoprotein complex"/>
    <property type="evidence" value="ECO:0007669"/>
    <property type="project" value="UniProtKB-KW"/>
</dbReference>
<dbReference type="GO" id="GO:0005840">
    <property type="term" value="C:ribosome"/>
    <property type="evidence" value="ECO:0007669"/>
    <property type="project" value="UniProtKB-KW"/>
</dbReference>
<dbReference type="GO" id="GO:0019843">
    <property type="term" value="F:rRNA binding"/>
    <property type="evidence" value="ECO:0007669"/>
    <property type="project" value="UniProtKB-UniRule"/>
</dbReference>
<dbReference type="GO" id="GO:0003735">
    <property type="term" value="F:structural constituent of ribosome"/>
    <property type="evidence" value="ECO:0007669"/>
    <property type="project" value="InterPro"/>
</dbReference>
<dbReference type="GO" id="GO:0006412">
    <property type="term" value="P:translation"/>
    <property type="evidence" value="ECO:0007669"/>
    <property type="project" value="UniProtKB-UniRule"/>
</dbReference>
<dbReference type="CDD" id="cd06089">
    <property type="entry name" value="KOW_RPL26"/>
    <property type="match status" value="1"/>
</dbReference>
<dbReference type="FunFam" id="2.30.30.30:FF:000004">
    <property type="entry name" value="50S ribosomal protein L24"/>
    <property type="match status" value="1"/>
</dbReference>
<dbReference type="Gene3D" id="2.30.30.30">
    <property type="match status" value="1"/>
</dbReference>
<dbReference type="HAMAP" id="MF_01326_B">
    <property type="entry name" value="Ribosomal_uL24_B"/>
    <property type="match status" value="1"/>
</dbReference>
<dbReference type="InterPro" id="IPR005824">
    <property type="entry name" value="KOW"/>
</dbReference>
<dbReference type="InterPro" id="IPR014722">
    <property type="entry name" value="Rib_uL2_dom2"/>
</dbReference>
<dbReference type="InterPro" id="IPR003256">
    <property type="entry name" value="Ribosomal_uL24"/>
</dbReference>
<dbReference type="InterPro" id="IPR005825">
    <property type="entry name" value="Ribosomal_uL24_CS"/>
</dbReference>
<dbReference type="InterPro" id="IPR041988">
    <property type="entry name" value="Ribosomal_uL24_KOW"/>
</dbReference>
<dbReference type="InterPro" id="IPR008991">
    <property type="entry name" value="Translation_prot_SH3-like_sf"/>
</dbReference>
<dbReference type="NCBIfam" id="TIGR01079">
    <property type="entry name" value="rplX_bact"/>
    <property type="match status" value="1"/>
</dbReference>
<dbReference type="PANTHER" id="PTHR12903">
    <property type="entry name" value="MITOCHONDRIAL RIBOSOMAL PROTEIN L24"/>
    <property type="match status" value="1"/>
</dbReference>
<dbReference type="Pfam" id="PF00467">
    <property type="entry name" value="KOW"/>
    <property type="match status" value="1"/>
</dbReference>
<dbReference type="Pfam" id="PF17136">
    <property type="entry name" value="ribosomal_L24"/>
    <property type="match status" value="1"/>
</dbReference>
<dbReference type="SMART" id="SM00739">
    <property type="entry name" value="KOW"/>
    <property type="match status" value="1"/>
</dbReference>
<dbReference type="SUPFAM" id="SSF50104">
    <property type="entry name" value="Translation proteins SH3-like domain"/>
    <property type="match status" value="1"/>
</dbReference>
<dbReference type="PROSITE" id="PS01108">
    <property type="entry name" value="RIBOSOMAL_L24"/>
    <property type="match status" value="1"/>
</dbReference>